<feature type="chain" id="PRO_0000415761" description="Polyadenylate-binding protein RBP45">
    <location>
        <begin position="1"/>
        <end position="409"/>
    </location>
</feature>
<feature type="domain" description="RRM 1" evidence="1">
    <location>
        <begin position="84"/>
        <end position="164"/>
    </location>
</feature>
<feature type="domain" description="RRM 2" evidence="1">
    <location>
        <begin position="176"/>
        <end position="255"/>
    </location>
</feature>
<feature type="domain" description="RRM 3" evidence="1">
    <location>
        <begin position="282"/>
        <end position="354"/>
    </location>
</feature>
<feature type="region of interest" description="Disordered" evidence="2">
    <location>
        <begin position="1"/>
        <end position="83"/>
    </location>
</feature>
<feature type="region of interest" description="Disordered" evidence="2">
    <location>
        <begin position="251"/>
        <end position="280"/>
    </location>
</feature>
<feature type="compositionally biased region" description="Low complexity" evidence="2">
    <location>
        <begin position="19"/>
        <end position="81"/>
    </location>
</feature>
<feature type="compositionally biased region" description="Polar residues" evidence="2">
    <location>
        <begin position="263"/>
        <end position="280"/>
    </location>
</feature>
<sequence length="409" mass="45243">MMPQSGVAQPPMAPMSMDQHQYQQQAPPPTQQQQWMMPPQQPQQPQFQPQSQPAWAQQPSQQQYGAMATTNPNPSPTGNPNEVRSLWIGDLQYWMDENYLSTCFYHTGELVSAKVIRNKQTGQSEGYGFLEFRSHAAAETILQTYNGTLMPNVEQNFRMNWASLGAGERRDDSAEHTIFVGDLAADVTDYILQETFKSVYSSVRGAKVVTDRITGRSKGYGFVKFADESEQLRAMTEMNGVLCSTRPMRIGPAANKKPVGTPQKATYQNPQATQGESDPNNTTIFVGGLDPTVAEEHLRQVFSPYGELVHVKIVAGKRCGFVQFGTRASAEQALSSLNGTQLGGQSIRLSWGRSPSSKQTDQTQWGGSGGAYYGYGQGYEAYGYAPPAQDPNMYYGNYPGYANYQQPQQ</sequence>
<dbReference type="EMBL" id="AJ292767">
    <property type="protein sequence ID" value="CAC01237.1"/>
    <property type="molecule type" value="mRNA"/>
</dbReference>
<dbReference type="SMR" id="Q9LEB4"/>
<dbReference type="GO" id="GO:0005829">
    <property type="term" value="C:cytosol"/>
    <property type="evidence" value="ECO:0007669"/>
    <property type="project" value="TreeGrafter"/>
</dbReference>
<dbReference type="GO" id="GO:0005634">
    <property type="term" value="C:nucleus"/>
    <property type="evidence" value="ECO:0000314"/>
    <property type="project" value="UniProtKB"/>
</dbReference>
<dbReference type="GO" id="GO:0003729">
    <property type="term" value="F:mRNA binding"/>
    <property type="evidence" value="ECO:0007669"/>
    <property type="project" value="InterPro"/>
</dbReference>
<dbReference type="GO" id="GO:0008143">
    <property type="term" value="F:poly(A) binding"/>
    <property type="evidence" value="ECO:0000314"/>
    <property type="project" value="UniProtKB"/>
</dbReference>
<dbReference type="GO" id="GO:0006397">
    <property type="term" value="P:mRNA processing"/>
    <property type="evidence" value="ECO:0007669"/>
    <property type="project" value="UniProtKB-KW"/>
</dbReference>
<dbReference type="CDD" id="cd12344">
    <property type="entry name" value="RRM1_SECp43_like"/>
    <property type="match status" value="1"/>
</dbReference>
<dbReference type="CDD" id="cd12345">
    <property type="entry name" value="RRM2_SECp43_like"/>
    <property type="match status" value="1"/>
</dbReference>
<dbReference type="FunFam" id="3.30.70.330:FF:000405">
    <property type="entry name" value="polyadenylate-binding protein RBP45"/>
    <property type="match status" value="1"/>
</dbReference>
<dbReference type="FunFam" id="3.30.70.330:FF:000236">
    <property type="entry name" value="Polyadenylate-binding protein RBP45C"/>
    <property type="match status" value="1"/>
</dbReference>
<dbReference type="FunFam" id="3.30.70.330:FF:000103">
    <property type="entry name" value="Polyadenylate-binding protein RBP47B"/>
    <property type="match status" value="1"/>
</dbReference>
<dbReference type="Gene3D" id="3.30.70.330">
    <property type="match status" value="3"/>
</dbReference>
<dbReference type="InterPro" id="IPR012677">
    <property type="entry name" value="Nucleotide-bd_a/b_plait_sf"/>
</dbReference>
<dbReference type="InterPro" id="IPR035979">
    <property type="entry name" value="RBD_domain_sf"/>
</dbReference>
<dbReference type="InterPro" id="IPR050825">
    <property type="entry name" value="RBM42_RBP45_47-like"/>
</dbReference>
<dbReference type="InterPro" id="IPR000504">
    <property type="entry name" value="RRM_dom"/>
</dbReference>
<dbReference type="PANTHER" id="PTHR47640:SF76">
    <property type="entry name" value="POLYADENYLATE-BINDING PROTEIN RBP45-LIKE ISOFORM X1"/>
    <property type="match status" value="1"/>
</dbReference>
<dbReference type="PANTHER" id="PTHR47640">
    <property type="entry name" value="TRNA SELENOCYSTEINE 1-ASSOCIATED PROTEIN 1-RELATED-RELATED"/>
    <property type="match status" value="1"/>
</dbReference>
<dbReference type="Pfam" id="PF00076">
    <property type="entry name" value="RRM_1"/>
    <property type="match status" value="3"/>
</dbReference>
<dbReference type="SMART" id="SM00360">
    <property type="entry name" value="RRM"/>
    <property type="match status" value="3"/>
</dbReference>
<dbReference type="SUPFAM" id="SSF54928">
    <property type="entry name" value="RNA-binding domain, RBD"/>
    <property type="match status" value="3"/>
</dbReference>
<dbReference type="PROSITE" id="PS50102">
    <property type="entry name" value="RRM"/>
    <property type="match status" value="3"/>
</dbReference>
<reference key="1">
    <citation type="journal article" date="2000" name="RNA">
        <title>RBP45 and RBP47, two oligouridylate-specific hnRNP-like proteins interacting with poly(A)+ RNA in nuclei of plant cells.</title>
        <authorList>
            <person name="Lorkovic Z.J."/>
            <person name="Wieczorek Kirk D.A."/>
            <person name="Klahre U."/>
            <person name="Hemmings-Mieszczak M."/>
            <person name="Filipowicz W."/>
        </authorList>
    </citation>
    <scope>NUCLEOTIDE SEQUENCE [MRNA]</scope>
    <scope>FUNCTION</scope>
    <scope>TISSUE SPECIFICITY</scope>
    <scope>SUBUNIT</scope>
    <scope>SUBCELLULAR LOCATION</scope>
    <scope>GENE FAMILY</scope>
    <scope>NOMENCLATURE</scope>
</reference>
<protein>
    <recommendedName>
        <fullName>Polyadenylate-binding protein RBP45</fullName>
        <shortName>Poly(A)-binding protein RBP45</shortName>
    </recommendedName>
    <alternativeName>
        <fullName>RNA-binding protein 45</fullName>
        <shortName>NplRBP45</shortName>
    </alternativeName>
</protein>
<organism>
    <name type="scientific">Nicotiana plumbaginifolia</name>
    <name type="common">Leadwort-leaved tobacco</name>
    <name type="synonym">Tex-Mex tobacco</name>
    <dbReference type="NCBI Taxonomy" id="4092"/>
    <lineage>
        <taxon>Eukaryota</taxon>
        <taxon>Viridiplantae</taxon>
        <taxon>Streptophyta</taxon>
        <taxon>Embryophyta</taxon>
        <taxon>Tracheophyta</taxon>
        <taxon>Spermatophyta</taxon>
        <taxon>Magnoliopsida</taxon>
        <taxon>eudicotyledons</taxon>
        <taxon>Gunneridae</taxon>
        <taxon>Pentapetalae</taxon>
        <taxon>asterids</taxon>
        <taxon>lamiids</taxon>
        <taxon>Solanales</taxon>
        <taxon>Solanaceae</taxon>
        <taxon>Nicotianoideae</taxon>
        <taxon>Nicotianeae</taxon>
        <taxon>Nicotiana</taxon>
    </lineage>
</organism>
<name>RBP45_NICPL</name>
<evidence type="ECO:0000255" key="1">
    <source>
        <dbReference type="PROSITE-ProRule" id="PRU00176"/>
    </source>
</evidence>
<evidence type="ECO:0000256" key="2">
    <source>
        <dbReference type="SAM" id="MobiDB-lite"/>
    </source>
</evidence>
<evidence type="ECO:0000269" key="3">
    <source>
    </source>
</evidence>
<evidence type="ECO:0000305" key="4"/>
<gene>
    <name type="primary">RBP45</name>
</gene>
<keyword id="KW-0507">mRNA processing</keyword>
<keyword id="KW-0539">Nucleus</keyword>
<keyword id="KW-0677">Repeat</keyword>
<keyword id="KW-0694">RNA-binding</keyword>
<accession>Q9LEB4</accession>
<comment type="function">
    <text evidence="3">Heterogeneous nuclear ribonucleoprotein (hnRNP)-protein binding the poly(A) tail of mRNA and probably involved in some steps of pre-mRNA maturation.</text>
</comment>
<comment type="subunit">
    <text evidence="3">Interacts with the poly(A) tail of mRNA in nucleus.</text>
</comment>
<comment type="subcellular location">
    <subcellularLocation>
        <location evidence="3">Nucleus</location>
    </subcellularLocation>
</comment>
<comment type="tissue specificity">
    <text evidence="3">Constitutively expressed in leaves, roots, and stems.</text>
</comment>
<comment type="similarity">
    <text evidence="4">Belongs to the polyadenylate-binding RBP45 family.</text>
</comment>
<proteinExistence type="evidence at protein level"/>